<protein>
    <recommendedName>
        <fullName evidence="1">tRNA pseudouridine synthase A</fullName>
        <ecNumber evidence="1">5.4.99.12</ecNumber>
    </recommendedName>
    <alternativeName>
        <fullName evidence="1">tRNA pseudouridine(38-40) synthase</fullName>
    </alternativeName>
    <alternativeName>
        <fullName evidence="1">tRNA pseudouridylate synthase I</fullName>
    </alternativeName>
    <alternativeName>
        <fullName evidence="1">tRNA-uridine isomerase I</fullName>
    </alternativeName>
</protein>
<feature type="chain" id="PRO_0000057395" description="tRNA pseudouridine synthase A">
    <location>
        <begin position="1"/>
        <end position="253"/>
    </location>
</feature>
<feature type="active site" description="Nucleophile" evidence="1">
    <location>
        <position position="53"/>
    </location>
</feature>
<feature type="binding site" evidence="1">
    <location>
        <position position="112"/>
    </location>
    <ligand>
        <name>substrate</name>
    </ligand>
</feature>
<dbReference type="EC" id="5.4.99.12" evidence="1"/>
<dbReference type="EMBL" id="AE005176">
    <property type="protein sequence ID" value="AAK04584.1"/>
    <property type="molecule type" value="Genomic_DNA"/>
</dbReference>
<dbReference type="PIR" id="F86685">
    <property type="entry name" value="F86685"/>
</dbReference>
<dbReference type="RefSeq" id="NP_266642.1">
    <property type="nucleotide sequence ID" value="NC_002662.1"/>
</dbReference>
<dbReference type="RefSeq" id="WP_003131523.1">
    <property type="nucleotide sequence ID" value="NC_002662.1"/>
</dbReference>
<dbReference type="SMR" id="Q9CI80"/>
<dbReference type="PaxDb" id="272623-L0331"/>
<dbReference type="EnsemblBacteria" id="AAK04584">
    <property type="protein sequence ID" value="AAK04584"/>
    <property type="gene ID" value="L0331"/>
</dbReference>
<dbReference type="KEGG" id="lla:L0331"/>
<dbReference type="PATRIC" id="fig|272623.7.peg.526"/>
<dbReference type="eggNOG" id="COG0101">
    <property type="taxonomic scope" value="Bacteria"/>
</dbReference>
<dbReference type="HOGENOM" id="CLU_014673_0_1_9"/>
<dbReference type="OrthoDB" id="9811823at2"/>
<dbReference type="Proteomes" id="UP000002196">
    <property type="component" value="Chromosome"/>
</dbReference>
<dbReference type="GO" id="GO:0003723">
    <property type="term" value="F:RNA binding"/>
    <property type="evidence" value="ECO:0007669"/>
    <property type="project" value="InterPro"/>
</dbReference>
<dbReference type="GO" id="GO:0160147">
    <property type="term" value="F:tRNA pseudouridine(38-40) synthase activity"/>
    <property type="evidence" value="ECO:0007669"/>
    <property type="project" value="UniProtKB-EC"/>
</dbReference>
<dbReference type="GO" id="GO:0031119">
    <property type="term" value="P:tRNA pseudouridine synthesis"/>
    <property type="evidence" value="ECO:0007669"/>
    <property type="project" value="UniProtKB-UniRule"/>
</dbReference>
<dbReference type="CDD" id="cd02570">
    <property type="entry name" value="PseudoU_synth_EcTruA"/>
    <property type="match status" value="1"/>
</dbReference>
<dbReference type="FunFam" id="3.30.70.580:FF:000001">
    <property type="entry name" value="tRNA pseudouridine synthase A"/>
    <property type="match status" value="1"/>
</dbReference>
<dbReference type="Gene3D" id="3.30.70.660">
    <property type="entry name" value="Pseudouridine synthase I, catalytic domain, C-terminal subdomain"/>
    <property type="match status" value="1"/>
</dbReference>
<dbReference type="Gene3D" id="3.30.70.580">
    <property type="entry name" value="Pseudouridine synthase I, catalytic domain, N-terminal subdomain"/>
    <property type="match status" value="1"/>
</dbReference>
<dbReference type="HAMAP" id="MF_00171">
    <property type="entry name" value="TruA"/>
    <property type="match status" value="1"/>
</dbReference>
<dbReference type="InterPro" id="IPR020103">
    <property type="entry name" value="PsdUridine_synth_cat_dom_sf"/>
</dbReference>
<dbReference type="InterPro" id="IPR001406">
    <property type="entry name" value="PsdUridine_synth_TruA"/>
</dbReference>
<dbReference type="InterPro" id="IPR020097">
    <property type="entry name" value="PsdUridine_synth_TruA_a/b_dom"/>
</dbReference>
<dbReference type="InterPro" id="IPR020095">
    <property type="entry name" value="PsdUridine_synth_TruA_C"/>
</dbReference>
<dbReference type="InterPro" id="IPR020094">
    <property type="entry name" value="TruA/RsuA/RluB/E/F_N"/>
</dbReference>
<dbReference type="NCBIfam" id="TIGR00071">
    <property type="entry name" value="hisT_truA"/>
    <property type="match status" value="1"/>
</dbReference>
<dbReference type="PANTHER" id="PTHR11142">
    <property type="entry name" value="PSEUDOURIDYLATE SYNTHASE"/>
    <property type="match status" value="1"/>
</dbReference>
<dbReference type="PANTHER" id="PTHR11142:SF0">
    <property type="entry name" value="TRNA PSEUDOURIDINE SYNTHASE-LIKE 1"/>
    <property type="match status" value="1"/>
</dbReference>
<dbReference type="Pfam" id="PF01416">
    <property type="entry name" value="PseudoU_synth_1"/>
    <property type="match status" value="2"/>
</dbReference>
<dbReference type="PIRSF" id="PIRSF001430">
    <property type="entry name" value="tRNA_psdUrid_synth"/>
    <property type="match status" value="1"/>
</dbReference>
<dbReference type="SUPFAM" id="SSF55120">
    <property type="entry name" value="Pseudouridine synthase"/>
    <property type="match status" value="1"/>
</dbReference>
<keyword id="KW-0413">Isomerase</keyword>
<keyword id="KW-1185">Reference proteome</keyword>
<keyword id="KW-0819">tRNA processing</keyword>
<proteinExistence type="inferred from homology"/>
<accession>Q9CI80</accession>
<sequence>MTRYKATIAYDGTDFAGFQSQTNQRTVQKEIEKILTKLNSFEPVILQGSGRTDSGVHAFGQVIHFDLKGKVRDLERLRFGLDTQTPADIAVKKVELVPDDWHARYQKHEKTYEYYLENSITRSPFQRHSKAYFRYPLNFERMQEAMSKLVGEHDFTGFTASGSSVDDKVRTIYQAEIIRLDEENFKFIFRGNGFLYKQVRNMVGTVIKIGNDRMPVSQIDKILTSKNRDFAGPTAAPEGLYLKEVKYAENTDI</sequence>
<comment type="function">
    <text evidence="1">Formation of pseudouridine at positions 38, 39 and 40 in the anticodon stem and loop of transfer RNAs.</text>
</comment>
<comment type="catalytic activity">
    <reaction evidence="1">
        <text>uridine(38/39/40) in tRNA = pseudouridine(38/39/40) in tRNA</text>
        <dbReference type="Rhea" id="RHEA:22376"/>
        <dbReference type="Rhea" id="RHEA-COMP:10085"/>
        <dbReference type="Rhea" id="RHEA-COMP:10087"/>
        <dbReference type="ChEBI" id="CHEBI:65314"/>
        <dbReference type="ChEBI" id="CHEBI:65315"/>
        <dbReference type="EC" id="5.4.99.12"/>
    </reaction>
</comment>
<comment type="subunit">
    <text evidence="1">Homodimer.</text>
</comment>
<comment type="similarity">
    <text evidence="1">Belongs to the tRNA pseudouridine synthase TruA family.</text>
</comment>
<evidence type="ECO:0000255" key="1">
    <source>
        <dbReference type="HAMAP-Rule" id="MF_00171"/>
    </source>
</evidence>
<gene>
    <name evidence="1" type="primary">truA</name>
    <name type="ordered locus">LL0486</name>
    <name type="ORF">L0331</name>
</gene>
<organism>
    <name type="scientific">Lactococcus lactis subsp. lactis (strain IL1403)</name>
    <name type="common">Streptococcus lactis</name>
    <dbReference type="NCBI Taxonomy" id="272623"/>
    <lineage>
        <taxon>Bacteria</taxon>
        <taxon>Bacillati</taxon>
        <taxon>Bacillota</taxon>
        <taxon>Bacilli</taxon>
        <taxon>Lactobacillales</taxon>
        <taxon>Streptococcaceae</taxon>
        <taxon>Lactococcus</taxon>
    </lineage>
</organism>
<name>TRUA_LACLA</name>
<reference key="1">
    <citation type="journal article" date="2001" name="Genome Res.">
        <title>The complete genome sequence of the lactic acid bacterium Lactococcus lactis ssp. lactis IL1403.</title>
        <authorList>
            <person name="Bolotin A."/>
            <person name="Wincker P."/>
            <person name="Mauger S."/>
            <person name="Jaillon O."/>
            <person name="Malarme K."/>
            <person name="Weissenbach J."/>
            <person name="Ehrlich S.D."/>
            <person name="Sorokin A."/>
        </authorList>
    </citation>
    <scope>NUCLEOTIDE SEQUENCE [LARGE SCALE GENOMIC DNA]</scope>
    <source>
        <strain>IL1403</strain>
    </source>
</reference>